<dbReference type="EC" id="3.1.3.48"/>
<dbReference type="EMBL" id="U00096">
    <property type="protein sequence ID" value="AAC74067.2"/>
    <property type="molecule type" value="Genomic_DNA"/>
</dbReference>
<dbReference type="EMBL" id="AP009048">
    <property type="protein sequence ID" value="BAA35747.2"/>
    <property type="molecule type" value="Genomic_DNA"/>
</dbReference>
<dbReference type="PIR" id="D64839">
    <property type="entry name" value="D64839"/>
</dbReference>
<dbReference type="RefSeq" id="NP_415502.4">
    <property type="nucleotide sequence ID" value="NC_000913.3"/>
</dbReference>
<dbReference type="RefSeq" id="WP_000057871.1">
    <property type="nucleotide sequence ID" value="NZ_STEB01000006.1"/>
</dbReference>
<dbReference type="SMR" id="P0ACZ2"/>
<dbReference type="BioGRID" id="4261407">
    <property type="interactions" value="381"/>
</dbReference>
<dbReference type="FunCoup" id="P0ACZ2">
    <property type="interactions" value="797"/>
</dbReference>
<dbReference type="STRING" id="511145.b0982"/>
<dbReference type="PaxDb" id="511145-b0982"/>
<dbReference type="EnsemblBacteria" id="AAC74067">
    <property type="protein sequence ID" value="AAC74067"/>
    <property type="gene ID" value="b0982"/>
</dbReference>
<dbReference type="GeneID" id="75171057"/>
<dbReference type="GeneID" id="945236"/>
<dbReference type="KEGG" id="ecj:JW5132"/>
<dbReference type="KEGG" id="eco:b0982"/>
<dbReference type="KEGG" id="ecoc:C3026_05990"/>
<dbReference type="PATRIC" id="fig|1411691.4.peg.1291"/>
<dbReference type="EchoBASE" id="EB3491"/>
<dbReference type="eggNOG" id="COG0394">
    <property type="taxonomic scope" value="Bacteria"/>
</dbReference>
<dbReference type="HOGENOM" id="CLU_071415_1_1_6"/>
<dbReference type="InParanoid" id="P0ACZ2"/>
<dbReference type="OMA" id="AFFPQKA"/>
<dbReference type="OrthoDB" id="9784339at2"/>
<dbReference type="PhylomeDB" id="P0ACZ2"/>
<dbReference type="BioCyc" id="EcoCyc:G6503-MONOMER"/>
<dbReference type="BioCyc" id="MetaCyc:G6503-MONOMER"/>
<dbReference type="PRO" id="PR:P0ACZ2"/>
<dbReference type="Proteomes" id="UP000000625">
    <property type="component" value="Chromosome"/>
</dbReference>
<dbReference type="GO" id="GO:0004725">
    <property type="term" value="F:protein tyrosine phosphatase activity"/>
    <property type="evidence" value="ECO:0000314"/>
    <property type="project" value="EcoCyc"/>
</dbReference>
<dbReference type="CDD" id="cd16343">
    <property type="entry name" value="LMWPTP"/>
    <property type="match status" value="1"/>
</dbReference>
<dbReference type="FunFam" id="3.40.50.2300:FF:000041">
    <property type="entry name" value="Low molecular weight protein-tyrosine-phosphatase"/>
    <property type="match status" value="1"/>
</dbReference>
<dbReference type="Gene3D" id="3.40.50.2300">
    <property type="match status" value="1"/>
</dbReference>
<dbReference type="InterPro" id="IPR050438">
    <property type="entry name" value="LMW_PTPase"/>
</dbReference>
<dbReference type="InterPro" id="IPR023485">
    <property type="entry name" value="Ptyr_pPase"/>
</dbReference>
<dbReference type="InterPro" id="IPR036196">
    <property type="entry name" value="Ptyr_pPase_sf"/>
</dbReference>
<dbReference type="InterPro" id="IPR017867">
    <property type="entry name" value="Tyr_phospatase_low_mol_wt"/>
</dbReference>
<dbReference type="NCBIfam" id="NF008486">
    <property type="entry name" value="PRK11391.1"/>
    <property type="match status" value="1"/>
</dbReference>
<dbReference type="PANTHER" id="PTHR11717">
    <property type="entry name" value="LOW MOLECULAR WEIGHT PROTEIN TYROSINE PHOSPHATASE"/>
    <property type="match status" value="1"/>
</dbReference>
<dbReference type="PANTHER" id="PTHR11717:SF31">
    <property type="entry name" value="LOW MOLECULAR WEIGHT PROTEIN-TYROSINE-PHOSPHATASE ETP-RELATED"/>
    <property type="match status" value="1"/>
</dbReference>
<dbReference type="Pfam" id="PF01451">
    <property type="entry name" value="LMWPc"/>
    <property type="match status" value="1"/>
</dbReference>
<dbReference type="PRINTS" id="PR00719">
    <property type="entry name" value="LMWPTPASE"/>
</dbReference>
<dbReference type="SMART" id="SM00226">
    <property type="entry name" value="LMWPc"/>
    <property type="match status" value="1"/>
</dbReference>
<dbReference type="SUPFAM" id="SSF52788">
    <property type="entry name" value="Phosphotyrosine protein phosphatases I"/>
    <property type="match status" value="1"/>
</dbReference>
<organism>
    <name type="scientific">Escherichia coli (strain K12)</name>
    <dbReference type="NCBI Taxonomy" id="83333"/>
    <lineage>
        <taxon>Bacteria</taxon>
        <taxon>Pseudomonadati</taxon>
        <taxon>Pseudomonadota</taxon>
        <taxon>Gammaproteobacteria</taxon>
        <taxon>Enterobacterales</taxon>
        <taxon>Enterobacteriaceae</taxon>
        <taxon>Escherichia</taxon>
    </lineage>
</organism>
<feature type="chain" id="PRO_0000046576" description="Low molecular weight protein-tyrosine-phosphatase Etp">
    <location>
        <begin position="1"/>
        <end position="148"/>
    </location>
</feature>
<feature type="active site" description="Nucleophile" evidence="1">
    <location>
        <position position="13"/>
    </location>
</feature>
<feature type="active site" evidence="1">
    <location>
        <position position="19"/>
    </location>
</feature>
<feature type="active site" description="Proton donor" evidence="1">
    <location>
        <position position="119"/>
    </location>
</feature>
<proteinExistence type="evidence at protein level"/>
<gene>
    <name type="primary">etp</name>
    <name type="synonym">yccY</name>
    <name type="ordered locus">b0982</name>
    <name type="ordered locus">JW5132</name>
</gene>
<evidence type="ECO:0000250" key="1">
    <source>
        <dbReference type="UniProtKB" id="P11064"/>
    </source>
</evidence>
<evidence type="ECO:0000305" key="2"/>
<accession>P0ACZ2</accession>
<accession>P75880</accession>
<accession>Q8XC24</accession>
<protein>
    <recommendedName>
        <fullName>Low molecular weight protein-tyrosine-phosphatase Etp</fullName>
        <ecNumber>3.1.3.48</ecNumber>
    </recommendedName>
</protein>
<keyword id="KW-0378">Hydrolase</keyword>
<keyword id="KW-0904">Protein phosphatase</keyword>
<keyword id="KW-1185">Reference proteome</keyword>
<reference key="1">
    <citation type="journal article" date="1996" name="DNA Res.">
        <title>A 718-kb DNA sequence of the Escherichia coli K-12 genome corresponding to the 12.7-28.0 min region on the linkage map.</title>
        <authorList>
            <person name="Oshima T."/>
            <person name="Aiba H."/>
            <person name="Baba T."/>
            <person name="Fujita K."/>
            <person name="Hayashi K."/>
            <person name="Honjo A."/>
            <person name="Ikemoto K."/>
            <person name="Inada T."/>
            <person name="Itoh T."/>
            <person name="Kajihara M."/>
            <person name="Kanai K."/>
            <person name="Kashimoto K."/>
            <person name="Kimura S."/>
            <person name="Kitagawa M."/>
            <person name="Makino K."/>
            <person name="Masuda S."/>
            <person name="Miki T."/>
            <person name="Mizobuchi K."/>
            <person name="Mori H."/>
            <person name="Motomura K."/>
            <person name="Nakamura Y."/>
            <person name="Nashimoto H."/>
            <person name="Nishio Y."/>
            <person name="Saito N."/>
            <person name="Sampei G."/>
            <person name="Seki Y."/>
            <person name="Tagami H."/>
            <person name="Takemoto K."/>
            <person name="Wada C."/>
            <person name="Yamamoto Y."/>
            <person name="Yano M."/>
            <person name="Horiuchi T."/>
        </authorList>
    </citation>
    <scope>NUCLEOTIDE SEQUENCE [LARGE SCALE GENOMIC DNA]</scope>
    <source>
        <strain>K12 / W3110 / ATCC 27325 / DSM 5911</strain>
    </source>
</reference>
<reference key="2">
    <citation type="journal article" date="1997" name="Science">
        <title>The complete genome sequence of Escherichia coli K-12.</title>
        <authorList>
            <person name="Blattner F.R."/>
            <person name="Plunkett G. III"/>
            <person name="Bloch C.A."/>
            <person name="Perna N.T."/>
            <person name="Burland V."/>
            <person name="Riley M."/>
            <person name="Collado-Vides J."/>
            <person name="Glasner J.D."/>
            <person name="Rode C.K."/>
            <person name="Mayhew G.F."/>
            <person name="Gregor J."/>
            <person name="Davis N.W."/>
            <person name="Kirkpatrick H.A."/>
            <person name="Goeden M.A."/>
            <person name="Rose D.J."/>
            <person name="Mau B."/>
            <person name="Shao Y."/>
        </authorList>
    </citation>
    <scope>NUCLEOTIDE SEQUENCE [LARGE SCALE GENOMIC DNA]</scope>
    <source>
        <strain>K12 / MG1655 / ATCC 47076</strain>
    </source>
</reference>
<reference key="3">
    <citation type="journal article" date="2006" name="Mol. Syst. Biol.">
        <title>Highly accurate genome sequences of Escherichia coli K-12 strains MG1655 and W3110.</title>
        <authorList>
            <person name="Hayashi K."/>
            <person name="Morooka N."/>
            <person name="Yamamoto Y."/>
            <person name="Fujita K."/>
            <person name="Isono K."/>
            <person name="Choi S."/>
            <person name="Ohtsubo E."/>
            <person name="Baba T."/>
            <person name="Wanner B.L."/>
            <person name="Mori H."/>
            <person name="Horiuchi T."/>
        </authorList>
    </citation>
    <scope>NUCLEOTIDE SEQUENCE [LARGE SCALE GENOMIC DNA]</scope>
    <source>
        <strain>K12 / W3110 / ATCC 27325 / DSM 5911</strain>
    </source>
</reference>
<reference key="4">
    <citation type="journal article" date="2000" name="J. Mol. Biol.">
        <title>Relationship between exopolysaccharide production and protein-tyrosine phosphorylation in Gram-negative bacteria.</title>
        <authorList>
            <person name="Vincent C."/>
            <person name="Duclos B."/>
            <person name="Grangeasse C."/>
            <person name="Vaganay E."/>
            <person name="Riberty M."/>
            <person name="Cozzone A.J."/>
            <person name="Doublet P."/>
        </authorList>
    </citation>
    <scope>CHARACTERIZATION</scope>
    <source>
        <strain>K12 / JM109 / ATCC 53323</strain>
    </source>
</reference>
<name>ETP_ECOLI</name>
<sequence>MAQLKFNSILVVCTGNICRSPIGERLLRKRLPGVKVKSAGVHGLVKHPADATAADVAANHGVSLEGHAGRKLTAEMARNYDLILAMESEHIAQVTAIAPEVRGKTMLFGQWLEQKEIPDPYRKSQDAFEHVYGMLERASQEWAKRLSR</sequence>
<comment type="function">
    <text>Dephosphorylates etk.</text>
</comment>
<comment type="catalytic activity">
    <reaction>
        <text>O-phospho-L-tyrosyl-[protein] + H2O = L-tyrosyl-[protein] + phosphate</text>
        <dbReference type="Rhea" id="RHEA:10684"/>
        <dbReference type="Rhea" id="RHEA-COMP:10136"/>
        <dbReference type="Rhea" id="RHEA-COMP:20101"/>
        <dbReference type="ChEBI" id="CHEBI:15377"/>
        <dbReference type="ChEBI" id="CHEBI:43474"/>
        <dbReference type="ChEBI" id="CHEBI:46858"/>
        <dbReference type="ChEBI" id="CHEBI:61978"/>
        <dbReference type="EC" id="3.1.3.48"/>
    </reaction>
</comment>
<comment type="similarity">
    <text evidence="2">Belongs to the low molecular weight phosphotyrosine protein phosphatase family.</text>
</comment>
<comment type="caution">
    <text evidence="2">In E.coli K12 / MG1655 and K12 / W3110 this operon is silenced by an IS1D insertion in the promoter region.</text>
</comment>